<reference key="1">
    <citation type="journal article" date="2000" name="Nature">
        <title>Sequence and analysis of chromosome 1 of the plant Arabidopsis thaliana.</title>
        <authorList>
            <person name="Theologis A."/>
            <person name="Ecker J.R."/>
            <person name="Palm C.J."/>
            <person name="Federspiel N.A."/>
            <person name="Kaul S."/>
            <person name="White O."/>
            <person name="Alonso J."/>
            <person name="Altafi H."/>
            <person name="Araujo R."/>
            <person name="Bowman C.L."/>
            <person name="Brooks S.Y."/>
            <person name="Buehler E."/>
            <person name="Chan A."/>
            <person name="Chao Q."/>
            <person name="Chen H."/>
            <person name="Cheuk R.F."/>
            <person name="Chin C.W."/>
            <person name="Chung M.K."/>
            <person name="Conn L."/>
            <person name="Conway A.B."/>
            <person name="Conway A.R."/>
            <person name="Creasy T.H."/>
            <person name="Dewar K."/>
            <person name="Dunn P."/>
            <person name="Etgu P."/>
            <person name="Feldblyum T.V."/>
            <person name="Feng J.-D."/>
            <person name="Fong B."/>
            <person name="Fujii C.Y."/>
            <person name="Gill J.E."/>
            <person name="Goldsmith A.D."/>
            <person name="Haas B."/>
            <person name="Hansen N.F."/>
            <person name="Hughes B."/>
            <person name="Huizar L."/>
            <person name="Hunter J.L."/>
            <person name="Jenkins J."/>
            <person name="Johnson-Hopson C."/>
            <person name="Khan S."/>
            <person name="Khaykin E."/>
            <person name="Kim C.J."/>
            <person name="Koo H.L."/>
            <person name="Kremenetskaia I."/>
            <person name="Kurtz D.B."/>
            <person name="Kwan A."/>
            <person name="Lam B."/>
            <person name="Langin-Hooper S."/>
            <person name="Lee A."/>
            <person name="Lee J.M."/>
            <person name="Lenz C.A."/>
            <person name="Li J.H."/>
            <person name="Li Y.-P."/>
            <person name="Lin X."/>
            <person name="Liu S.X."/>
            <person name="Liu Z.A."/>
            <person name="Luros J.S."/>
            <person name="Maiti R."/>
            <person name="Marziali A."/>
            <person name="Militscher J."/>
            <person name="Miranda M."/>
            <person name="Nguyen M."/>
            <person name="Nierman W.C."/>
            <person name="Osborne B.I."/>
            <person name="Pai G."/>
            <person name="Peterson J."/>
            <person name="Pham P.K."/>
            <person name="Rizzo M."/>
            <person name="Rooney T."/>
            <person name="Rowley D."/>
            <person name="Sakano H."/>
            <person name="Salzberg S.L."/>
            <person name="Schwartz J.R."/>
            <person name="Shinn P."/>
            <person name="Southwick A.M."/>
            <person name="Sun H."/>
            <person name="Tallon L.J."/>
            <person name="Tambunga G."/>
            <person name="Toriumi M.J."/>
            <person name="Town C.D."/>
            <person name="Utterback T."/>
            <person name="Van Aken S."/>
            <person name="Vaysberg M."/>
            <person name="Vysotskaia V.S."/>
            <person name="Walker M."/>
            <person name="Wu D."/>
            <person name="Yu G."/>
            <person name="Fraser C.M."/>
            <person name="Venter J.C."/>
            <person name="Davis R.W."/>
        </authorList>
    </citation>
    <scope>NUCLEOTIDE SEQUENCE [LARGE SCALE GENOMIC DNA]</scope>
    <source>
        <strain>cv. Columbia</strain>
    </source>
</reference>
<reference key="2">
    <citation type="journal article" date="2017" name="Plant J.">
        <title>Araport11: a complete reannotation of the Arabidopsis thaliana reference genome.</title>
        <authorList>
            <person name="Cheng C.Y."/>
            <person name="Krishnakumar V."/>
            <person name="Chan A.P."/>
            <person name="Thibaud-Nissen F."/>
            <person name="Schobel S."/>
            <person name="Town C.D."/>
        </authorList>
    </citation>
    <scope>GENOME REANNOTATION</scope>
    <source>
        <strain>cv. Columbia</strain>
    </source>
</reference>
<reference key="3">
    <citation type="journal article" date="2004" name="Plant Cell">
        <title>Genome-wide analysis of Arabidopsis pentatricopeptide repeat proteins reveals their essential role in organelle biogenesis.</title>
        <authorList>
            <person name="Lurin C."/>
            <person name="Andres C."/>
            <person name="Aubourg S."/>
            <person name="Bellaoui M."/>
            <person name="Bitton F."/>
            <person name="Bruyere C."/>
            <person name="Caboche M."/>
            <person name="Debast C."/>
            <person name="Gualberto J."/>
            <person name="Hoffmann B."/>
            <person name="Lecharny A."/>
            <person name="Le Ret M."/>
            <person name="Martin-Magniette M.-L."/>
            <person name="Mireau H."/>
            <person name="Peeters N."/>
            <person name="Renou J.-P."/>
            <person name="Szurek B."/>
            <person name="Taconnat L."/>
            <person name="Small I."/>
        </authorList>
    </citation>
    <scope>GENE FAMILY</scope>
</reference>
<reference key="4">
    <citation type="journal article" date="2005" name="Planta">
        <title>Arabidopsis emb175 and other ppr knockout mutants reveal essential roles for pentatricopeptide repeat (PPR) proteins in plant embryogenesis.</title>
        <authorList>
            <person name="Cushing D.A."/>
            <person name="Forsthoefel N.R."/>
            <person name="Gestaut D.R."/>
            <person name="Vernon D.M."/>
        </authorList>
    </citation>
    <scope>FUNCTION</scope>
</reference>
<feature type="transit peptide" description="Chloroplast" evidence="1">
    <location>
        <begin position="1"/>
        <end position="40"/>
    </location>
</feature>
<feature type="chain" id="PRO_0000342805" description="Pentatricopeptide repeat-containing protein At1g30610, chloroplastic">
    <location>
        <begin position="41"/>
        <end position="1006"/>
    </location>
</feature>
<feature type="repeat" description="PPR 1">
    <location>
        <begin position="468"/>
        <end position="502"/>
    </location>
</feature>
<feature type="repeat" description="PPR 2">
    <location>
        <begin position="506"/>
        <end position="536"/>
    </location>
</feature>
<feature type="repeat" description="PPR 3">
    <location>
        <begin position="542"/>
        <end position="572"/>
    </location>
</feature>
<feature type="repeat" description="PPR 4">
    <location>
        <begin position="592"/>
        <end position="626"/>
    </location>
</feature>
<feature type="repeat" description="PPR 5">
    <location>
        <begin position="627"/>
        <end position="657"/>
    </location>
</feature>
<feature type="repeat" description="PPR 6">
    <location>
        <begin position="661"/>
        <end position="695"/>
    </location>
</feature>
<feature type="repeat" description="PPR 7">
    <location>
        <begin position="759"/>
        <end position="789"/>
    </location>
</feature>
<feature type="repeat" description="PPR 8">
    <location>
        <begin position="793"/>
        <end position="827"/>
    </location>
</feature>
<feature type="repeat" description="PPR 9">
    <location>
        <begin position="840"/>
        <end position="874"/>
    </location>
</feature>
<feature type="repeat" description="PPR 10">
    <location>
        <begin position="875"/>
        <end position="909"/>
    </location>
</feature>
<feature type="region of interest" description="Disordered" evidence="2">
    <location>
        <begin position="180"/>
        <end position="219"/>
    </location>
</feature>
<feature type="region of interest" description="Disordered" evidence="2">
    <location>
        <begin position="248"/>
        <end position="292"/>
    </location>
</feature>
<feature type="compositionally biased region" description="Basic and acidic residues" evidence="2">
    <location>
        <begin position="194"/>
        <end position="219"/>
    </location>
</feature>
<feature type="compositionally biased region" description="Polar residues" evidence="2">
    <location>
        <begin position="254"/>
        <end position="263"/>
    </location>
</feature>
<feature type="compositionally biased region" description="Basic and acidic residues" evidence="2">
    <location>
        <begin position="265"/>
        <end position="284"/>
    </location>
</feature>
<keyword id="KW-0025">Alternative splicing</keyword>
<keyword id="KW-0150">Chloroplast</keyword>
<keyword id="KW-0934">Plastid</keyword>
<keyword id="KW-1185">Reference proteome</keyword>
<keyword id="KW-0677">Repeat</keyword>
<keyword id="KW-0809">Transit peptide</keyword>
<name>PPR64_ARATH</name>
<evidence type="ECO:0000255" key="1"/>
<evidence type="ECO:0000256" key="2">
    <source>
        <dbReference type="SAM" id="MobiDB-lite"/>
    </source>
</evidence>
<evidence type="ECO:0000269" key="3">
    <source>
    </source>
</evidence>
<evidence type="ECO:0000305" key="4"/>
<accession>Q9SA76</accession>
<gene>
    <name type="primary">EMB2279</name>
    <name type="ordered locus">At1g30610</name>
    <name type="ORF">T5I8.6</name>
</gene>
<sequence length="1006" mass="116095">MAVTISTNAFVNASLLDESRNSFWRPLFHQPYYNCRRVVRLNSRKLNSKVMFCLNLNTKEVGLQKPGDKGFEFKPSFDQYLQIMESVKTARKKKKFDRLKVEEDDGGGGNGDSVYEVKDMKIKSGELKDETFRKRYSRQEIVSDKRNERVFKRNGEIENHRVATDLKWSKSGESSVALKLSKSGESSVTVPEDESFRKRYSKQEYHRSSDTSRGIERGSRGDELDLVVEERRVQRIAKDARWSKSRESSVAVKWSNSGESSVTMPKDESFRRRYSKQEHHRSSDTSRGIARGSKGDELELVVEERRVQRIAKDVRWSKSDESLVPVSEDESFRRGNPKQEMVRYQRVSDTSRGIERGSKGDGLDLLAEERRIERLANERHEIRSSKLSGTRRIGAKRNDDDDDSLFAMETPAFRFSDESSDIVDKPATSRVEMEDRIEKLAKVLNGADINMPEWQFSKAIRSAKIRYTDYTVMRLIHFLGKLGNWRRVLQVIEWLQRQDRYKSNKIRIIYTTALNVLGKSRRPVEALNVFHAMLLQISSYPDMVAYRSIAVTLGQAGHIKELFYVIDTMRSPPKKKFKPTTLEKWDPRLEPDVVVYNAVLNACVQRKQWEGAFWVLQQLKQRGQKPSPVTYGLIMEVMLACEKYNLVHEFFRKMQKSSIPNALAYRVLVNTLWKEGKSDEAVHTVEDMESRGIVGSAALYYDLARCLCSAGRCNEGLNMVNFVNPVVLKLIENLIYKADLVHTIQFQLKKICRVANKPLVVTYTGLIQACVDSGNIKNAAYIFDQMKKVCSPNLVTCNIMLKAYLQGGLFEEARELFQKMSEDGNHIKNSSDFESRVLPDTYTFNTMLDTCAEQEKWDDFGYAYREMLRHGYHFNAKRHLRMVLEASRAGKEEVMEATWEHMRRSNRIPPSPLIKERFFRKLEKGDHISAISSLADLNGKIEETELRAFSTSAWSRVLSRFEQDSVLRLMDDVNRRLGSRSESSDSVLGNLLSSCKDYLKTRTHNL</sequence>
<proteinExistence type="inferred from homology"/>
<dbReference type="EMBL" id="AC007060">
    <property type="protein sequence ID" value="AAD25748.1"/>
    <property type="molecule type" value="Genomic_DNA"/>
</dbReference>
<dbReference type="EMBL" id="CP002684">
    <property type="protein sequence ID" value="AEE31249.1"/>
    <property type="molecule type" value="Genomic_DNA"/>
</dbReference>
<dbReference type="PIR" id="D86431">
    <property type="entry name" value="D86431"/>
</dbReference>
<dbReference type="RefSeq" id="NP_174349.1">
    <molecule id="Q9SA76-1"/>
    <property type="nucleotide sequence ID" value="NM_102798.2"/>
</dbReference>
<dbReference type="SMR" id="Q9SA76"/>
<dbReference type="FunCoup" id="Q9SA76">
    <property type="interactions" value="1413"/>
</dbReference>
<dbReference type="STRING" id="3702.Q9SA76"/>
<dbReference type="iPTMnet" id="Q9SA76"/>
<dbReference type="PaxDb" id="3702-AT1G30610.1"/>
<dbReference type="ProteomicsDB" id="226397">
    <molecule id="Q9SA76-1"/>
</dbReference>
<dbReference type="EnsemblPlants" id="AT1G30610.1">
    <molecule id="Q9SA76-1"/>
    <property type="protein sequence ID" value="AT1G30610.1"/>
    <property type="gene ID" value="AT1G30610"/>
</dbReference>
<dbReference type="GeneID" id="839941"/>
<dbReference type="Gramene" id="AT1G30610.1">
    <molecule id="Q9SA76-1"/>
    <property type="protein sequence ID" value="AT1G30610.1"/>
    <property type="gene ID" value="AT1G30610"/>
</dbReference>
<dbReference type="KEGG" id="ath:AT1G30610"/>
<dbReference type="Araport" id="AT1G30610"/>
<dbReference type="TAIR" id="AT1G30610">
    <property type="gene designation" value="EMB2279"/>
</dbReference>
<dbReference type="eggNOG" id="KOG4197">
    <property type="taxonomic scope" value="Eukaryota"/>
</dbReference>
<dbReference type="InParanoid" id="Q9SA76"/>
<dbReference type="OMA" id="EMVSDKR"/>
<dbReference type="PhylomeDB" id="Q9SA76"/>
<dbReference type="PRO" id="PR:Q9SA76"/>
<dbReference type="Proteomes" id="UP000006548">
    <property type="component" value="Chromosome 1"/>
</dbReference>
<dbReference type="ExpressionAtlas" id="Q9SA76">
    <property type="expression patterns" value="baseline and differential"/>
</dbReference>
<dbReference type="GO" id="GO:0009507">
    <property type="term" value="C:chloroplast"/>
    <property type="evidence" value="ECO:0000314"/>
    <property type="project" value="TAIR"/>
</dbReference>
<dbReference type="GO" id="GO:0003729">
    <property type="term" value="F:mRNA binding"/>
    <property type="evidence" value="ECO:0000314"/>
    <property type="project" value="TAIR"/>
</dbReference>
<dbReference type="GO" id="GO:0010239">
    <property type="term" value="P:chloroplast mRNA processing"/>
    <property type="evidence" value="ECO:0000315"/>
    <property type="project" value="TAIR"/>
</dbReference>
<dbReference type="GO" id="GO:0009658">
    <property type="term" value="P:chloroplast organization"/>
    <property type="evidence" value="ECO:0000315"/>
    <property type="project" value="TAIR"/>
</dbReference>
<dbReference type="GO" id="GO:0009793">
    <property type="term" value="P:embryo development ending in seed dormancy"/>
    <property type="evidence" value="ECO:0000315"/>
    <property type="project" value="TAIR"/>
</dbReference>
<dbReference type="FunFam" id="1.25.40.10:FF:000363">
    <property type="entry name" value="Pentatricopeptide repeat-containing protein"/>
    <property type="match status" value="1"/>
</dbReference>
<dbReference type="FunFam" id="1.25.40.10:FF:001393">
    <property type="entry name" value="Pentatricopeptide repeat-containing protein chloroplastic"/>
    <property type="match status" value="1"/>
</dbReference>
<dbReference type="Gene3D" id="1.25.40.10">
    <property type="entry name" value="Tetratricopeptide repeat domain"/>
    <property type="match status" value="3"/>
</dbReference>
<dbReference type="InterPro" id="IPR044645">
    <property type="entry name" value="DG1/EMB2279-like"/>
</dbReference>
<dbReference type="InterPro" id="IPR002885">
    <property type="entry name" value="Pentatricopeptide_rpt"/>
</dbReference>
<dbReference type="InterPro" id="IPR011990">
    <property type="entry name" value="TPR-like_helical_dom_sf"/>
</dbReference>
<dbReference type="NCBIfam" id="TIGR00756">
    <property type="entry name" value="PPR"/>
    <property type="match status" value="4"/>
</dbReference>
<dbReference type="PANTHER" id="PTHR46935">
    <property type="entry name" value="OS01G0674700 PROTEIN"/>
    <property type="match status" value="1"/>
</dbReference>
<dbReference type="PANTHER" id="PTHR46935:SF1">
    <property type="entry name" value="OS01G0674700 PROTEIN"/>
    <property type="match status" value="1"/>
</dbReference>
<dbReference type="Pfam" id="PF01535">
    <property type="entry name" value="PPR"/>
    <property type="match status" value="2"/>
</dbReference>
<dbReference type="Pfam" id="PF13041">
    <property type="entry name" value="PPR_2"/>
    <property type="match status" value="1"/>
</dbReference>
<dbReference type="Pfam" id="PF13812">
    <property type="entry name" value="PPR_3"/>
    <property type="match status" value="1"/>
</dbReference>
<dbReference type="SUPFAM" id="SSF48452">
    <property type="entry name" value="TPR-like"/>
    <property type="match status" value="1"/>
</dbReference>
<dbReference type="PROSITE" id="PS51375">
    <property type="entry name" value="PPR"/>
    <property type="match status" value="10"/>
</dbReference>
<protein>
    <recommendedName>
        <fullName>Pentatricopeptide repeat-containing protein At1g30610, chloroplastic</fullName>
    </recommendedName>
    <alternativeName>
        <fullName>Protein EMBRYO DEFECTIVE 2279</fullName>
    </alternativeName>
</protein>
<comment type="function">
    <text evidence="3">May play a role in embryogenesis.</text>
</comment>
<comment type="subcellular location">
    <subcellularLocation>
        <location evidence="4">Plastid</location>
        <location evidence="4">Chloroplast</location>
    </subcellularLocation>
</comment>
<comment type="alternative products">
    <event type="alternative splicing"/>
    <isoform>
        <id>Q9SA76-1</id>
        <name>1</name>
        <sequence type="displayed"/>
    </isoform>
    <text>A number of isoforms are produced. According to EST sequences.</text>
</comment>
<comment type="similarity">
    <text evidence="4">Belongs to the PPR family. P subfamily.</text>
</comment>
<comment type="online information" name="Pentatricopeptide repeat proteins">
    <link uri="https://ppr.plantenergy.uwa.edu.au"/>
</comment>
<organism>
    <name type="scientific">Arabidopsis thaliana</name>
    <name type="common">Mouse-ear cress</name>
    <dbReference type="NCBI Taxonomy" id="3702"/>
    <lineage>
        <taxon>Eukaryota</taxon>
        <taxon>Viridiplantae</taxon>
        <taxon>Streptophyta</taxon>
        <taxon>Embryophyta</taxon>
        <taxon>Tracheophyta</taxon>
        <taxon>Spermatophyta</taxon>
        <taxon>Magnoliopsida</taxon>
        <taxon>eudicotyledons</taxon>
        <taxon>Gunneridae</taxon>
        <taxon>Pentapetalae</taxon>
        <taxon>rosids</taxon>
        <taxon>malvids</taxon>
        <taxon>Brassicales</taxon>
        <taxon>Brassicaceae</taxon>
        <taxon>Camelineae</taxon>
        <taxon>Arabidopsis</taxon>
    </lineage>
</organism>